<evidence type="ECO:0000255" key="1">
    <source>
        <dbReference type="HAMAP-Rule" id="MF_00083"/>
    </source>
</evidence>
<feature type="chain" id="PRO_1000092909" description="Peptidyl-tRNA hydrolase">
    <location>
        <begin position="1"/>
        <end position="198"/>
    </location>
</feature>
<feature type="active site" description="Proton acceptor" evidence="1">
    <location>
        <position position="19"/>
    </location>
</feature>
<feature type="binding site" evidence="1">
    <location>
        <position position="14"/>
    </location>
    <ligand>
        <name>tRNA</name>
        <dbReference type="ChEBI" id="CHEBI:17843"/>
    </ligand>
</feature>
<feature type="binding site" evidence="1">
    <location>
        <position position="64"/>
    </location>
    <ligand>
        <name>tRNA</name>
        <dbReference type="ChEBI" id="CHEBI:17843"/>
    </ligand>
</feature>
<feature type="binding site" evidence="1">
    <location>
        <position position="66"/>
    </location>
    <ligand>
        <name>tRNA</name>
        <dbReference type="ChEBI" id="CHEBI:17843"/>
    </ligand>
</feature>
<feature type="binding site" evidence="1">
    <location>
        <position position="112"/>
    </location>
    <ligand>
        <name>tRNA</name>
        <dbReference type="ChEBI" id="CHEBI:17843"/>
    </ligand>
</feature>
<feature type="site" description="Discriminates between blocked and unblocked aminoacyl-tRNA" evidence="1">
    <location>
        <position position="9"/>
    </location>
</feature>
<feature type="site" description="Stabilizes the basic form of H active site to accept a proton" evidence="1">
    <location>
        <position position="91"/>
    </location>
</feature>
<keyword id="KW-0963">Cytoplasm</keyword>
<keyword id="KW-0378">Hydrolase</keyword>
<keyword id="KW-1185">Reference proteome</keyword>
<keyword id="KW-0694">RNA-binding</keyword>
<keyword id="KW-0820">tRNA-binding</keyword>
<gene>
    <name evidence="1" type="primary">pth</name>
    <name type="ordered locus">Bind_3581</name>
</gene>
<organism>
    <name type="scientific">Beijerinckia indica subsp. indica (strain ATCC 9039 / DSM 1715 / NCIMB 8712)</name>
    <dbReference type="NCBI Taxonomy" id="395963"/>
    <lineage>
        <taxon>Bacteria</taxon>
        <taxon>Pseudomonadati</taxon>
        <taxon>Pseudomonadota</taxon>
        <taxon>Alphaproteobacteria</taxon>
        <taxon>Hyphomicrobiales</taxon>
        <taxon>Beijerinckiaceae</taxon>
        <taxon>Beijerinckia</taxon>
    </lineage>
</organism>
<proteinExistence type="inferred from homology"/>
<protein>
    <recommendedName>
        <fullName evidence="1">Peptidyl-tRNA hydrolase</fullName>
        <shortName evidence="1">Pth</shortName>
        <ecNumber evidence="1">3.1.1.29</ecNumber>
    </recommendedName>
</protein>
<comment type="function">
    <text evidence="1">Hydrolyzes ribosome-free peptidyl-tRNAs (with 1 or more amino acids incorporated), which drop off the ribosome during protein synthesis, or as a result of ribosome stalling.</text>
</comment>
<comment type="function">
    <text evidence="1">Catalyzes the release of premature peptidyl moieties from peptidyl-tRNA molecules trapped in stalled 50S ribosomal subunits, and thus maintains levels of free tRNAs and 50S ribosomes.</text>
</comment>
<comment type="catalytic activity">
    <reaction evidence="1">
        <text>an N-acyl-L-alpha-aminoacyl-tRNA + H2O = an N-acyl-L-amino acid + a tRNA + H(+)</text>
        <dbReference type="Rhea" id="RHEA:54448"/>
        <dbReference type="Rhea" id="RHEA-COMP:10123"/>
        <dbReference type="Rhea" id="RHEA-COMP:13883"/>
        <dbReference type="ChEBI" id="CHEBI:15377"/>
        <dbReference type="ChEBI" id="CHEBI:15378"/>
        <dbReference type="ChEBI" id="CHEBI:59874"/>
        <dbReference type="ChEBI" id="CHEBI:78442"/>
        <dbReference type="ChEBI" id="CHEBI:138191"/>
        <dbReference type="EC" id="3.1.1.29"/>
    </reaction>
</comment>
<comment type="subunit">
    <text evidence="1">Monomer.</text>
</comment>
<comment type="subcellular location">
    <subcellularLocation>
        <location evidence="1">Cytoplasm</location>
    </subcellularLocation>
</comment>
<comment type="similarity">
    <text evidence="1">Belongs to the PTH family.</text>
</comment>
<dbReference type="EC" id="3.1.1.29" evidence="1"/>
<dbReference type="EMBL" id="CP001016">
    <property type="protein sequence ID" value="ACB97137.1"/>
    <property type="molecule type" value="Genomic_DNA"/>
</dbReference>
<dbReference type="RefSeq" id="WP_012386485.1">
    <property type="nucleotide sequence ID" value="NC_010581.1"/>
</dbReference>
<dbReference type="SMR" id="B2IG63"/>
<dbReference type="STRING" id="395963.Bind_3581"/>
<dbReference type="KEGG" id="bid:Bind_3581"/>
<dbReference type="eggNOG" id="COG0193">
    <property type="taxonomic scope" value="Bacteria"/>
</dbReference>
<dbReference type="HOGENOM" id="CLU_062456_1_0_5"/>
<dbReference type="OrthoDB" id="9800507at2"/>
<dbReference type="Proteomes" id="UP000001695">
    <property type="component" value="Chromosome"/>
</dbReference>
<dbReference type="GO" id="GO:0005737">
    <property type="term" value="C:cytoplasm"/>
    <property type="evidence" value="ECO:0007669"/>
    <property type="project" value="UniProtKB-SubCell"/>
</dbReference>
<dbReference type="GO" id="GO:0004045">
    <property type="term" value="F:peptidyl-tRNA hydrolase activity"/>
    <property type="evidence" value="ECO:0007669"/>
    <property type="project" value="UniProtKB-UniRule"/>
</dbReference>
<dbReference type="GO" id="GO:0000049">
    <property type="term" value="F:tRNA binding"/>
    <property type="evidence" value="ECO:0007669"/>
    <property type="project" value="UniProtKB-UniRule"/>
</dbReference>
<dbReference type="GO" id="GO:0006515">
    <property type="term" value="P:protein quality control for misfolded or incompletely synthesized proteins"/>
    <property type="evidence" value="ECO:0007669"/>
    <property type="project" value="UniProtKB-UniRule"/>
</dbReference>
<dbReference type="GO" id="GO:0072344">
    <property type="term" value="P:rescue of stalled ribosome"/>
    <property type="evidence" value="ECO:0007669"/>
    <property type="project" value="UniProtKB-UniRule"/>
</dbReference>
<dbReference type="CDD" id="cd00462">
    <property type="entry name" value="PTH"/>
    <property type="match status" value="1"/>
</dbReference>
<dbReference type="FunFam" id="3.40.50.1470:FF:000001">
    <property type="entry name" value="Peptidyl-tRNA hydrolase"/>
    <property type="match status" value="1"/>
</dbReference>
<dbReference type="Gene3D" id="3.40.50.1470">
    <property type="entry name" value="Peptidyl-tRNA hydrolase"/>
    <property type="match status" value="1"/>
</dbReference>
<dbReference type="HAMAP" id="MF_00083">
    <property type="entry name" value="Pept_tRNA_hydro_bact"/>
    <property type="match status" value="1"/>
</dbReference>
<dbReference type="InterPro" id="IPR001328">
    <property type="entry name" value="Pept_tRNA_hydro"/>
</dbReference>
<dbReference type="InterPro" id="IPR018171">
    <property type="entry name" value="Pept_tRNA_hydro_CS"/>
</dbReference>
<dbReference type="InterPro" id="IPR036416">
    <property type="entry name" value="Pept_tRNA_hydro_sf"/>
</dbReference>
<dbReference type="NCBIfam" id="TIGR00447">
    <property type="entry name" value="pth"/>
    <property type="match status" value="1"/>
</dbReference>
<dbReference type="PANTHER" id="PTHR17224">
    <property type="entry name" value="PEPTIDYL-TRNA HYDROLASE"/>
    <property type="match status" value="1"/>
</dbReference>
<dbReference type="PANTHER" id="PTHR17224:SF1">
    <property type="entry name" value="PEPTIDYL-TRNA HYDROLASE"/>
    <property type="match status" value="1"/>
</dbReference>
<dbReference type="Pfam" id="PF01195">
    <property type="entry name" value="Pept_tRNA_hydro"/>
    <property type="match status" value="1"/>
</dbReference>
<dbReference type="SUPFAM" id="SSF53178">
    <property type="entry name" value="Peptidyl-tRNA hydrolase-like"/>
    <property type="match status" value="1"/>
</dbReference>
<dbReference type="PROSITE" id="PS01195">
    <property type="entry name" value="PEPT_TRNA_HYDROL_1"/>
    <property type="match status" value="1"/>
</dbReference>
<dbReference type="PROSITE" id="PS01196">
    <property type="entry name" value="PEPT_TRNA_HYDROL_2"/>
    <property type="match status" value="1"/>
</dbReference>
<name>PTH_BEII9</name>
<accession>B2IG63</accession>
<sequence>MLLFVGLGNPGKAYSANRHNIGFMAIDAIAREYGAPAFRARFQGLTSEITLSGEKIVLLKPETYMNESGRSVSDAVHFYKIDASRVIVFHDELDLAPGKVRVKKGGGNAGHNGLKSITQHITNDYRRVRIGIGHPGIKDMVRHYVLGDFSKTESAWVETLCLSIAVNAPLLAKGEDENFQNKIFHAMETAGLAKDGLF</sequence>
<reference key="1">
    <citation type="journal article" date="2010" name="J. Bacteriol.">
        <title>Complete genome sequence of Beijerinckia indica subsp. indica.</title>
        <authorList>
            <person name="Tamas I."/>
            <person name="Dedysh S.N."/>
            <person name="Liesack W."/>
            <person name="Stott M.B."/>
            <person name="Alam M."/>
            <person name="Murrell J.C."/>
            <person name="Dunfield P.F."/>
        </authorList>
    </citation>
    <scope>NUCLEOTIDE SEQUENCE [LARGE SCALE GENOMIC DNA]</scope>
    <source>
        <strain>ATCC 9039 / DSM 1715 / NCIMB 8712</strain>
    </source>
</reference>